<keyword id="KW-0067">ATP-binding</keyword>
<keyword id="KW-0963">Cytoplasm</keyword>
<keyword id="KW-0418">Kinase</keyword>
<keyword id="KW-0520">NAD</keyword>
<keyword id="KW-0521">NADP</keyword>
<keyword id="KW-0547">Nucleotide-binding</keyword>
<keyword id="KW-0808">Transferase</keyword>
<dbReference type="EC" id="2.7.1.23" evidence="1"/>
<dbReference type="EMBL" id="BA000034">
    <property type="protein sequence ID" value="BAC64081.1"/>
    <property type="molecule type" value="Genomic_DNA"/>
</dbReference>
<dbReference type="RefSeq" id="WP_002993124.1">
    <property type="nucleotide sequence ID" value="NC_004606.1"/>
</dbReference>
<dbReference type="SMR" id="P0DD17"/>
<dbReference type="KEGG" id="sps:SPs0986"/>
<dbReference type="HOGENOM" id="CLU_008831_0_3_9"/>
<dbReference type="GO" id="GO:0005737">
    <property type="term" value="C:cytoplasm"/>
    <property type="evidence" value="ECO:0007669"/>
    <property type="project" value="UniProtKB-SubCell"/>
</dbReference>
<dbReference type="GO" id="GO:0005524">
    <property type="term" value="F:ATP binding"/>
    <property type="evidence" value="ECO:0007669"/>
    <property type="project" value="UniProtKB-KW"/>
</dbReference>
<dbReference type="GO" id="GO:0046872">
    <property type="term" value="F:metal ion binding"/>
    <property type="evidence" value="ECO:0007669"/>
    <property type="project" value="UniProtKB-UniRule"/>
</dbReference>
<dbReference type="GO" id="GO:0051287">
    <property type="term" value="F:NAD binding"/>
    <property type="evidence" value="ECO:0007669"/>
    <property type="project" value="UniProtKB-ARBA"/>
</dbReference>
<dbReference type="GO" id="GO:0003951">
    <property type="term" value="F:NAD+ kinase activity"/>
    <property type="evidence" value="ECO:0007669"/>
    <property type="project" value="UniProtKB-UniRule"/>
</dbReference>
<dbReference type="GO" id="GO:0019674">
    <property type="term" value="P:NAD metabolic process"/>
    <property type="evidence" value="ECO:0007669"/>
    <property type="project" value="InterPro"/>
</dbReference>
<dbReference type="GO" id="GO:0006741">
    <property type="term" value="P:NADP biosynthetic process"/>
    <property type="evidence" value="ECO:0007669"/>
    <property type="project" value="UniProtKB-UniRule"/>
</dbReference>
<dbReference type="Gene3D" id="3.40.50.10330">
    <property type="entry name" value="Probable inorganic polyphosphate/atp-NAD kinase, domain 1"/>
    <property type="match status" value="1"/>
</dbReference>
<dbReference type="Gene3D" id="2.60.200.30">
    <property type="entry name" value="Probable inorganic polyphosphate/atp-NAD kinase, domain 2"/>
    <property type="match status" value="1"/>
</dbReference>
<dbReference type="HAMAP" id="MF_00361">
    <property type="entry name" value="NAD_kinase"/>
    <property type="match status" value="1"/>
</dbReference>
<dbReference type="InterPro" id="IPR017438">
    <property type="entry name" value="ATP-NAD_kinase_N"/>
</dbReference>
<dbReference type="InterPro" id="IPR017437">
    <property type="entry name" value="ATP-NAD_kinase_PpnK-typ_C"/>
</dbReference>
<dbReference type="InterPro" id="IPR016064">
    <property type="entry name" value="NAD/diacylglycerol_kinase_sf"/>
</dbReference>
<dbReference type="InterPro" id="IPR002504">
    <property type="entry name" value="NADK"/>
</dbReference>
<dbReference type="NCBIfam" id="NF003424">
    <property type="entry name" value="PRK04885.1"/>
    <property type="match status" value="1"/>
</dbReference>
<dbReference type="PANTHER" id="PTHR20275">
    <property type="entry name" value="NAD KINASE"/>
    <property type="match status" value="1"/>
</dbReference>
<dbReference type="PANTHER" id="PTHR20275:SF0">
    <property type="entry name" value="NAD KINASE"/>
    <property type="match status" value="1"/>
</dbReference>
<dbReference type="Pfam" id="PF01513">
    <property type="entry name" value="NAD_kinase"/>
    <property type="match status" value="1"/>
</dbReference>
<dbReference type="Pfam" id="PF20143">
    <property type="entry name" value="NAD_kinase_C"/>
    <property type="match status" value="1"/>
</dbReference>
<dbReference type="SUPFAM" id="SSF111331">
    <property type="entry name" value="NAD kinase/diacylglycerol kinase-like"/>
    <property type="match status" value="1"/>
</dbReference>
<feature type="chain" id="PRO_0000411446" description="NAD kinase">
    <location>
        <begin position="1"/>
        <end position="278"/>
    </location>
</feature>
<feature type="active site" description="Proton acceptor" evidence="1">
    <location>
        <position position="56"/>
    </location>
</feature>
<feature type="binding site" evidence="1">
    <location>
        <begin position="56"/>
        <end position="57"/>
    </location>
    <ligand>
        <name>NAD(+)</name>
        <dbReference type="ChEBI" id="CHEBI:57540"/>
    </ligand>
</feature>
<feature type="binding site" evidence="1">
    <location>
        <begin position="132"/>
        <end position="133"/>
    </location>
    <ligand>
        <name>NAD(+)</name>
        <dbReference type="ChEBI" id="CHEBI:57540"/>
    </ligand>
</feature>
<feature type="binding site" evidence="1">
    <location>
        <position position="158"/>
    </location>
    <ligand>
        <name>NAD(+)</name>
        <dbReference type="ChEBI" id="CHEBI:57540"/>
    </ligand>
</feature>
<feature type="binding site" evidence="1">
    <location>
        <position position="160"/>
    </location>
    <ligand>
        <name>NAD(+)</name>
        <dbReference type="ChEBI" id="CHEBI:57540"/>
    </ligand>
</feature>
<feature type="binding site" evidence="1">
    <location>
        <begin position="171"/>
        <end position="176"/>
    </location>
    <ligand>
        <name>NAD(+)</name>
        <dbReference type="ChEBI" id="CHEBI:57540"/>
    </ligand>
</feature>
<protein>
    <recommendedName>
        <fullName evidence="1">NAD kinase</fullName>
        <ecNumber evidence="1">2.7.1.23</ecNumber>
    </recommendedName>
    <alternativeName>
        <fullName evidence="1">ATP-dependent NAD kinase</fullName>
    </alternativeName>
</protein>
<proteinExistence type="inferred from homology"/>
<gene>
    <name evidence="1" type="primary">nadK</name>
    <name type="ordered locus">SPs0986</name>
</gene>
<sequence>MTQMNYTGKVKRVAIIANGKYQSKRVASKLFSVFKDDPDFYLSKKNPDIVISIGGDGMLLSAFHMYEKELDKVRFVGIHTGHLGFYTDYRDFEVDKLIDNLRKDKGEQISYPILKVAITLDDGRVVKARALNEATVKRIEKTMVADVIINHVKFESFRGDGISVSTPTGSTAYNKSLGGAVLHPTIEALQLTEISSLNNRVFRTLGSSIIIPKKDKIELVPKRLGIYTISIDNKTYQLKNVTKVEYFIDDEKIHFVSSPSHTSFWERVKDAFIGEIDS</sequence>
<organism>
    <name type="scientific">Streptococcus pyogenes serotype M3 (strain SSI-1)</name>
    <dbReference type="NCBI Taxonomy" id="193567"/>
    <lineage>
        <taxon>Bacteria</taxon>
        <taxon>Bacillati</taxon>
        <taxon>Bacillota</taxon>
        <taxon>Bacilli</taxon>
        <taxon>Lactobacillales</taxon>
        <taxon>Streptococcaceae</taxon>
        <taxon>Streptococcus</taxon>
    </lineage>
</organism>
<reference key="1">
    <citation type="journal article" date="2003" name="Genome Res.">
        <title>Genome sequence of an M3 strain of Streptococcus pyogenes reveals a large-scale genomic rearrangement in invasive strains and new insights into phage evolution.</title>
        <authorList>
            <person name="Nakagawa I."/>
            <person name="Kurokawa K."/>
            <person name="Yamashita A."/>
            <person name="Nakata M."/>
            <person name="Tomiyasu Y."/>
            <person name="Okahashi N."/>
            <person name="Kawabata S."/>
            <person name="Yamazaki K."/>
            <person name="Shiba T."/>
            <person name="Yasunaga T."/>
            <person name="Hayashi H."/>
            <person name="Hattori M."/>
            <person name="Hamada S."/>
        </authorList>
    </citation>
    <scope>NUCLEOTIDE SEQUENCE [LARGE SCALE GENOMIC DNA]</scope>
    <source>
        <strain>SSI-1</strain>
    </source>
</reference>
<comment type="function">
    <text evidence="1">Involved in the regulation of the intracellular balance of NAD and NADP, and is a key enzyme in the biosynthesis of NADP. Catalyzes specifically the phosphorylation on 2'-hydroxyl of the adenosine moiety of NAD to yield NADP.</text>
</comment>
<comment type="catalytic activity">
    <reaction evidence="1">
        <text>NAD(+) + ATP = ADP + NADP(+) + H(+)</text>
        <dbReference type="Rhea" id="RHEA:18629"/>
        <dbReference type="ChEBI" id="CHEBI:15378"/>
        <dbReference type="ChEBI" id="CHEBI:30616"/>
        <dbReference type="ChEBI" id="CHEBI:57540"/>
        <dbReference type="ChEBI" id="CHEBI:58349"/>
        <dbReference type="ChEBI" id="CHEBI:456216"/>
        <dbReference type="EC" id="2.7.1.23"/>
    </reaction>
</comment>
<comment type="cofactor">
    <cofactor evidence="1">
        <name>a divalent metal cation</name>
        <dbReference type="ChEBI" id="CHEBI:60240"/>
    </cofactor>
</comment>
<comment type="subcellular location">
    <subcellularLocation>
        <location evidence="1">Cytoplasm</location>
    </subcellularLocation>
</comment>
<comment type="similarity">
    <text evidence="1">Belongs to the NAD kinase family.</text>
</comment>
<accession>P0DD17</accession>
<accession>P65782</accession>
<accession>Q99ZQ7</accession>
<evidence type="ECO:0000255" key="1">
    <source>
        <dbReference type="HAMAP-Rule" id="MF_00361"/>
    </source>
</evidence>
<name>NADK_STRPQ</name>